<proteinExistence type="inferred from homology"/>
<name>FLUC_ACIBC</name>
<organism>
    <name type="scientific">Acinetobacter baumannii (strain ACICU)</name>
    <dbReference type="NCBI Taxonomy" id="405416"/>
    <lineage>
        <taxon>Bacteria</taxon>
        <taxon>Pseudomonadati</taxon>
        <taxon>Pseudomonadota</taxon>
        <taxon>Gammaproteobacteria</taxon>
        <taxon>Moraxellales</taxon>
        <taxon>Moraxellaceae</taxon>
        <taxon>Acinetobacter</taxon>
        <taxon>Acinetobacter calcoaceticus/baumannii complex</taxon>
    </lineage>
</organism>
<gene>
    <name evidence="1" type="primary">fluC</name>
    <name evidence="1" type="synonym">crcB</name>
    <name type="ordered locus">ACICU_00398</name>
</gene>
<comment type="function">
    <text evidence="1">Fluoride-specific ion channel. Important for reducing fluoride concentration in the cell, thus reducing its toxicity.</text>
</comment>
<comment type="catalytic activity">
    <reaction evidence="1">
        <text>fluoride(in) = fluoride(out)</text>
        <dbReference type="Rhea" id="RHEA:76159"/>
        <dbReference type="ChEBI" id="CHEBI:17051"/>
    </reaction>
    <physiologicalReaction direction="left-to-right" evidence="1">
        <dbReference type="Rhea" id="RHEA:76160"/>
    </physiologicalReaction>
</comment>
<comment type="activity regulation">
    <text evidence="1">Na(+) is not transported, but it plays an essential structural role and its presence is essential for fluoride channel function.</text>
</comment>
<comment type="subcellular location">
    <subcellularLocation>
        <location evidence="1">Cell inner membrane</location>
        <topology evidence="1">Multi-pass membrane protein</topology>
    </subcellularLocation>
</comment>
<comment type="similarity">
    <text evidence="1">Belongs to the fluoride channel Fluc/FEX (TC 1.A.43) family.</text>
</comment>
<protein>
    <recommendedName>
        <fullName evidence="1">Fluoride-specific ion channel FluC</fullName>
    </recommendedName>
</protein>
<accession>B2I2S5</accession>
<sequence>MYYPLLSIALGSVLGAWLRWLLGLKLNPIYPQIPLGTVTVNLAGGFIIGFAMAYFAHSDLSPNYKLFVITGFCGALTTFSTFSIEIVTLLQSGKWGMAMLAISIHLIGSLIFTCLGLATYYWVAGN</sequence>
<reference key="1">
    <citation type="journal article" date="2008" name="Antimicrob. Agents Chemother.">
        <title>Whole-genome pyrosequencing of an epidemic multidrug-resistant Acinetobacter baumannii strain belonging to the European clone II group.</title>
        <authorList>
            <person name="Iacono M."/>
            <person name="Villa L."/>
            <person name="Fortini D."/>
            <person name="Bordoni R."/>
            <person name="Imperi F."/>
            <person name="Bonnal R.J."/>
            <person name="Sicheritz-Ponten T."/>
            <person name="De Bellis G."/>
            <person name="Visca P."/>
            <person name="Cassone A."/>
            <person name="Carattoli A."/>
        </authorList>
    </citation>
    <scope>NUCLEOTIDE SEQUENCE [LARGE SCALE GENOMIC DNA]</scope>
    <source>
        <strain>ACICU</strain>
    </source>
</reference>
<keyword id="KW-0997">Cell inner membrane</keyword>
<keyword id="KW-1003">Cell membrane</keyword>
<keyword id="KW-0407">Ion channel</keyword>
<keyword id="KW-0406">Ion transport</keyword>
<keyword id="KW-0472">Membrane</keyword>
<keyword id="KW-0479">Metal-binding</keyword>
<keyword id="KW-0915">Sodium</keyword>
<keyword id="KW-0812">Transmembrane</keyword>
<keyword id="KW-1133">Transmembrane helix</keyword>
<keyword id="KW-0813">Transport</keyword>
<feature type="chain" id="PRO_1000189702" description="Fluoride-specific ion channel FluC">
    <location>
        <begin position="1"/>
        <end position="126"/>
    </location>
</feature>
<feature type="transmembrane region" description="Helical" evidence="1">
    <location>
        <begin position="4"/>
        <end position="24"/>
    </location>
</feature>
<feature type="transmembrane region" description="Helical" evidence="1">
    <location>
        <begin position="33"/>
        <end position="53"/>
    </location>
</feature>
<feature type="transmembrane region" description="Helical" evidence="1">
    <location>
        <begin position="67"/>
        <end position="87"/>
    </location>
</feature>
<feature type="transmembrane region" description="Helical" evidence="1">
    <location>
        <begin position="97"/>
        <end position="117"/>
    </location>
</feature>
<feature type="binding site" evidence="1">
    <location>
        <position position="74"/>
    </location>
    <ligand>
        <name>Na(+)</name>
        <dbReference type="ChEBI" id="CHEBI:29101"/>
        <note>structural</note>
    </ligand>
</feature>
<feature type="binding site" evidence="1">
    <location>
        <position position="77"/>
    </location>
    <ligand>
        <name>Na(+)</name>
        <dbReference type="ChEBI" id="CHEBI:29101"/>
        <note>structural</note>
    </ligand>
</feature>
<dbReference type="EMBL" id="CP000863">
    <property type="protein sequence ID" value="ACC55710.1"/>
    <property type="molecule type" value="Genomic_DNA"/>
</dbReference>
<dbReference type="RefSeq" id="WP_000291738.1">
    <property type="nucleotide sequence ID" value="NZ_CP031380.1"/>
</dbReference>
<dbReference type="SMR" id="B2I2S5"/>
<dbReference type="KEGG" id="abc:ACICU_00398"/>
<dbReference type="HOGENOM" id="CLU_114342_3_3_6"/>
<dbReference type="Proteomes" id="UP000008839">
    <property type="component" value="Chromosome"/>
</dbReference>
<dbReference type="GO" id="GO:0005886">
    <property type="term" value="C:plasma membrane"/>
    <property type="evidence" value="ECO:0007669"/>
    <property type="project" value="UniProtKB-SubCell"/>
</dbReference>
<dbReference type="GO" id="GO:0062054">
    <property type="term" value="F:fluoride channel activity"/>
    <property type="evidence" value="ECO:0007669"/>
    <property type="project" value="UniProtKB-UniRule"/>
</dbReference>
<dbReference type="GO" id="GO:0046872">
    <property type="term" value="F:metal ion binding"/>
    <property type="evidence" value="ECO:0007669"/>
    <property type="project" value="UniProtKB-KW"/>
</dbReference>
<dbReference type="GO" id="GO:0140114">
    <property type="term" value="P:cellular detoxification of fluoride"/>
    <property type="evidence" value="ECO:0007669"/>
    <property type="project" value="UniProtKB-UniRule"/>
</dbReference>
<dbReference type="HAMAP" id="MF_00454">
    <property type="entry name" value="FluC"/>
    <property type="match status" value="1"/>
</dbReference>
<dbReference type="InterPro" id="IPR003691">
    <property type="entry name" value="FluC"/>
</dbReference>
<dbReference type="NCBIfam" id="TIGR00494">
    <property type="entry name" value="crcB"/>
    <property type="match status" value="1"/>
</dbReference>
<dbReference type="NCBIfam" id="NF010792">
    <property type="entry name" value="PRK14196.1"/>
    <property type="match status" value="1"/>
</dbReference>
<dbReference type="PANTHER" id="PTHR28259">
    <property type="entry name" value="FLUORIDE EXPORT PROTEIN 1-RELATED"/>
    <property type="match status" value="1"/>
</dbReference>
<dbReference type="PANTHER" id="PTHR28259:SF1">
    <property type="entry name" value="FLUORIDE EXPORT PROTEIN 1-RELATED"/>
    <property type="match status" value="1"/>
</dbReference>
<dbReference type="Pfam" id="PF02537">
    <property type="entry name" value="CRCB"/>
    <property type="match status" value="1"/>
</dbReference>
<evidence type="ECO:0000255" key="1">
    <source>
        <dbReference type="HAMAP-Rule" id="MF_00454"/>
    </source>
</evidence>